<dbReference type="EMBL" id="CP000471">
    <property type="protein sequence ID" value="ABK43030.1"/>
    <property type="molecule type" value="Genomic_DNA"/>
</dbReference>
<dbReference type="RefSeq" id="WP_011712197.1">
    <property type="nucleotide sequence ID" value="NC_008576.1"/>
</dbReference>
<dbReference type="SMR" id="A0L4Y7"/>
<dbReference type="STRING" id="156889.Mmc1_0505"/>
<dbReference type="KEGG" id="mgm:Mmc1_0505"/>
<dbReference type="eggNOG" id="COG0806">
    <property type="taxonomic scope" value="Bacteria"/>
</dbReference>
<dbReference type="HOGENOM" id="CLU_077636_1_0_5"/>
<dbReference type="OrthoDB" id="9788191at2"/>
<dbReference type="Proteomes" id="UP000002586">
    <property type="component" value="Chromosome"/>
</dbReference>
<dbReference type="GO" id="GO:0005737">
    <property type="term" value="C:cytoplasm"/>
    <property type="evidence" value="ECO:0007669"/>
    <property type="project" value="UniProtKB-SubCell"/>
</dbReference>
<dbReference type="GO" id="GO:0005840">
    <property type="term" value="C:ribosome"/>
    <property type="evidence" value="ECO:0007669"/>
    <property type="project" value="InterPro"/>
</dbReference>
<dbReference type="GO" id="GO:0043022">
    <property type="term" value="F:ribosome binding"/>
    <property type="evidence" value="ECO:0007669"/>
    <property type="project" value="InterPro"/>
</dbReference>
<dbReference type="GO" id="GO:0042274">
    <property type="term" value="P:ribosomal small subunit biogenesis"/>
    <property type="evidence" value="ECO:0007669"/>
    <property type="project" value="UniProtKB-UniRule"/>
</dbReference>
<dbReference type="GO" id="GO:0006364">
    <property type="term" value="P:rRNA processing"/>
    <property type="evidence" value="ECO:0007669"/>
    <property type="project" value="UniProtKB-UniRule"/>
</dbReference>
<dbReference type="Gene3D" id="2.30.30.240">
    <property type="entry name" value="PRC-barrel domain"/>
    <property type="match status" value="1"/>
</dbReference>
<dbReference type="Gene3D" id="2.40.30.60">
    <property type="entry name" value="RimM"/>
    <property type="match status" value="1"/>
</dbReference>
<dbReference type="HAMAP" id="MF_00014">
    <property type="entry name" value="Ribosome_mat_RimM"/>
    <property type="match status" value="1"/>
</dbReference>
<dbReference type="InterPro" id="IPR011033">
    <property type="entry name" value="PRC_barrel-like_sf"/>
</dbReference>
<dbReference type="InterPro" id="IPR056792">
    <property type="entry name" value="PRC_RimM"/>
</dbReference>
<dbReference type="InterPro" id="IPR011961">
    <property type="entry name" value="RimM"/>
</dbReference>
<dbReference type="InterPro" id="IPR002676">
    <property type="entry name" value="RimM_N"/>
</dbReference>
<dbReference type="InterPro" id="IPR036976">
    <property type="entry name" value="RimM_N_sf"/>
</dbReference>
<dbReference type="InterPro" id="IPR009000">
    <property type="entry name" value="Transl_B-barrel_sf"/>
</dbReference>
<dbReference type="NCBIfam" id="TIGR02273">
    <property type="entry name" value="16S_RimM"/>
    <property type="match status" value="1"/>
</dbReference>
<dbReference type="PANTHER" id="PTHR33692">
    <property type="entry name" value="RIBOSOME MATURATION FACTOR RIMM"/>
    <property type="match status" value="1"/>
</dbReference>
<dbReference type="PANTHER" id="PTHR33692:SF1">
    <property type="entry name" value="RIBOSOME MATURATION FACTOR RIMM"/>
    <property type="match status" value="1"/>
</dbReference>
<dbReference type="Pfam" id="PF24986">
    <property type="entry name" value="PRC_RimM"/>
    <property type="match status" value="1"/>
</dbReference>
<dbReference type="Pfam" id="PF01782">
    <property type="entry name" value="RimM"/>
    <property type="match status" value="1"/>
</dbReference>
<dbReference type="SUPFAM" id="SSF50346">
    <property type="entry name" value="PRC-barrel domain"/>
    <property type="match status" value="1"/>
</dbReference>
<dbReference type="SUPFAM" id="SSF50447">
    <property type="entry name" value="Translation proteins"/>
    <property type="match status" value="1"/>
</dbReference>
<sequence length="177" mass="19434">MSGTEEIRWVTLGYVMGAFGLKGEMRVRSLTERPDGIFDHPVWWLFNPKQKTRQEMRLGSGRLHGKGVVATLAGVTTREAVQALFGTEIQVPRSMLPDGGDDPGVDGIWADLIGCQVVEVDGTELGRVVEMMATGANDVLIVRGGPEGEKLLPYIEEVVVELDLDRQIIKVKLMEGM</sequence>
<name>RIMM_MAGMM</name>
<evidence type="ECO:0000255" key="1">
    <source>
        <dbReference type="HAMAP-Rule" id="MF_00014"/>
    </source>
</evidence>
<keyword id="KW-0143">Chaperone</keyword>
<keyword id="KW-0963">Cytoplasm</keyword>
<keyword id="KW-1185">Reference proteome</keyword>
<keyword id="KW-0690">Ribosome biogenesis</keyword>
<keyword id="KW-0698">rRNA processing</keyword>
<organism>
    <name type="scientific">Magnetococcus marinus (strain ATCC BAA-1437 / JCM 17883 / MC-1)</name>
    <dbReference type="NCBI Taxonomy" id="156889"/>
    <lineage>
        <taxon>Bacteria</taxon>
        <taxon>Pseudomonadati</taxon>
        <taxon>Pseudomonadota</taxon>
        <taxon>Alphaproteobacteria</taxon>
        <taxon>Magnetococcales</taxon>
        <taxon>Magnetococcaceae</taxon>
        <taxon>Magnetococcus</taxon>
    </lineage>
</organism>
<reference key="1">
    <citation type="journal article" date="2009" name="Appl. Environ. Microbiol.">
        <title>Complete genome sequence of the chemolithoautotrophic marine magnetotactic coccus strain MC-1.</title>
        <authorList>
            <person name="Schubbe S."/>
            <person name="Williams T.J."/>
            <person name="Xie G."/>
            <person name="Kiss H.E."/>
            <person name="Brettin T.S."/>
            <person name="Martinez D."/>
            <person name="Ross C.A."/>
            <person name="Schuler D."/>
            <person name="Cox B.L."/>
            <person name="Nealson K.H."/>
            <person name="Bazylinski D.A."/>
        </authorList>
    </citation>
    <scope>NUCLEOTIDE SEQUENCE [LARGE SCALE GENOMIC DNA]</scope>
    <source>
        <strain>ATCC BAA-1437 / JCM 17883 / MC-1</strain>
    </source>
</reference>
<accession>A0L4Y7</accession>
<proteinExistence type="inferred from homology"/>
<feature type="chain" id="PRO_1000001193" description="Ribosome maturation factor RimM">
    <location>
        <begin position="1"/>
        <end position="177"/>
    </location>
</feature>
<feature type="domain" description="PRC barrel" evidence="1">
    <location>
        <begin position="104"/>
        <end position="177"/>
    </location>
</feature>
<protein>
    <recommendedName>
        <fullName evidence="1">Ribosome maturation factor RimM</fullName>
    </recommendedName>
</protein>
<gene>
    <name evidence="1" type="primary">rimM</name>
    <name type="ordered locus">Mmc1_0505</name>
</gene>
<comment type="function">
    <text evidence="1">An accessory protein needed during the final step in the assembly of 30S ribosomal subunit, possibly for assembly of the head region. Essential for efficient processing of 16S rRNA. May be needed both before and after RbfA during the maturation of 16S rRNA. It has affinity for free ribosomal 30S subunits but not for 70S ribosomes.</text>
</comment>
<comment type="subunit">
    <text evidence="1">Binds ribosomal protein uS19.</text>
</comment>
<comment type="subcellular location">
    <subcellularLocation>
        <location evidence="1">Cytoplasm</location>
    </subcellularLocation>
</comment>
<comment type="domain">
    <text evidence="1">The PRC barrel domain binds ribosomal protein uS19.</text>
</comment>
<comment type="similarity">
    <text evidence="1">Belongs to the RimM family.</text>
</comment>